<dbReference type="EC" id="1.2.1.38" evidence="1"/>
<dbReference type="EMBL" id="AL591688">
    <property type="protein sequence ID" value="CAC45819.1"/>
    <property type="status" value="ALT_INIT"/>
    <property type="molecule type" value="Genomic_DNA"/>
</dbReference>
<dbReference type="RefSeq" id="NP_385346.2">
    <property type="nucleotide sequence ID" value="NC_003047.1"/>
</dbReference>
<dbReference type="RefSeq" id="WP_010969129.1">
    <property type="nucleotide sequence ID" value="NC_003047.1"/>
</dbReference>
<dbReference type="SMR" id="Q92QR7"/>
<dbReference type="EnsemblBacteria" id="CAC45819">
    <property type="protein sequence ID" value="CAC45819"/>
    <property type="gene ID" value="SMc01801"/>
</dbReference>
<dbReference type="GeneID" id="89575562"/>
<dbReference type="KEGG" id="sme:SMc01801"/>
<dbReference type="PATRIC" id="fig|266834.11.peg.2652"/>
<dbReference type="eggNOG" id="COG0002">
    <property type="taxonomic scope" value="Bacteria"/>
</dbReference>
<dbReference type="OrthoDB" id="9801289at2"/>
<dbReference type="UniPathway" id="UPA00068">
    <property type="reaction ID" value="UER00108"/>
</dbReference>
<dbReference type="Proteomes" id="UP000001976">
    <property type="component" value="Chromosome"/>
</dbReference>
<dbReference type="GO" id="GO:0005737">
    <property type="term" value="C:cytoplasm"/>
    <property type="evidence" value="ECO:0007669"/>
    <property type="project" value="UniProtKB-SubCell"/>
</dbReference>
<dbReference type="GO" id="GO:0003942">
    <property type="term" value="F:N-acetyl-gamma-glutamyl-phosphate reductase activity"/>
    <property type="evidence" value="ECO:0007669"/>
    <property type="project" value="UniProtKB-UniRule"/>
</dbReference>
<dbReference type="GO" id="GO:0051287">
    <property type="term" value="F:NAD binding"/>
    <property type="evidence" value="ECO:0007669"/>
    <property type="project" value="InterPro"/>
</dbReference>
<dbReference type="GO" id="GO:0006526">
    <property type="term" value="P:L-arginine biosynthetic process"/>
    <property type="evidence" value="ECO:0007669"/>
    <property type="project" value="UniProtKB-UniRule"/>
</dbReference>
<dbReference type="CDD" id="cd23935">
    <property type="entry name" value="AGPR_2_C"/>
    <property type="match status" value="1"/>
</dbReference>
<dbReference type="CDD" id="cd17896">
    <property type="entry name" value="AGPR_2_N"/>
    <property type="match status" value="1"/>
</dbReference>
<dbReference type="Gene3D" id="3.30.360.10">
    <property type="entry name" value="Dihydrodipicolinate Reductase, domain 2"/>
    <property type="match status" value="1"/>
</dbReference>
<dbReference type="Gene3D" id="3.40.50.720">
    <property type="entry name" value="NAD(P)-binding Rossmann-like Domain"/>
    <property type="match status" value="1"/>
</dbReference>
<dbReference type="HAMAP" id="MF_01110">
    <property type="entry name" value="ArgC_type2"/>
    <property type="match status" value="1"/>
</dbReference>
<dbReference type="InterPro" id="IPR023013">
    <property type="entry name" value="AGPR_AS"/>
</dbReference>
<dbReference type="InterPro" id="IPR010136">
    <property type="entry name" value="AGPR_type-2"/>
</dbReference>
<dbReference type="InterPro" id="IPR036291">
    <property type="entry name" value="NAD(P)-bd_dom_sf"/>
</dbReference>
<dbReference type="InterPro" id="IPR050085">
    <property type="entry name" value="NAGSA_dehydrogenase"/>
</dbReference>
<dbReference type="InterPro" id="IPR000534">
    <property type="entry name" value="Semialdehyde_DH_NAD-bd"/>
</dbReference>
<dbReference type="NCBIfam" id="TIGR01851">
    <property type="entry name" value="argC_other"/>
    <property type="match status" value="1"/>
</dbReference>
<dbReference type="PANTHER" id="PTHR32338:SF10">
    <property type="entry name" value="N-ACETYL-GAMMA-GLUTAMYL-PHOSPHATE REDUCTASE, CHLOROPLASTIC-RELATED"/>
    <property type="match status" value="1"/>
</dbReference>
<dbReference type="PANTHER" id="PTHR32338">
    <property type="entry name" value="N-ACETYL-GAMMA-GLUTAMYL-PHOSPHATE REDUCTASE, CHLOROPLASTIC-RELATED-RELATED"/>
    <property type="match status" value="1"/>
</dbReference>
<dbReference type="Pfam" id="PF01118">
    <property type="entry name" value="Semialdhyde_dh"/>
    <property type="match status" value="1"/>
</dbReference>
<dbReference type="Pfam" id="PF22698">
    <property type="entry name" value="Semialdhyde_dhC_1"/>
    <property type="match status" value="1"/>
</dbReference>
<dbReference type="SMART" id="SM00859">
    <property type="entry name" value="Semialdhyde_dh"/>
    <property type="match status" value="1"/>
</dbReference>
<dbReference type="SUPFAM" id="SSF55347">
    <property type="entry name" value="Glyceraldehyde-3-phosphate dehydrogenase-like, C-terminal domain"/>
    <property type="match status" value="1"/>
</dbReference>
<dbReference type="SUPFAM" id="SSF51735">
    <property type="entry name" value="NAD(P)-binding Rossmann-fold domains"/>
    <property type="match status" value="1"/>
</dbReference>
<dbReference type="PROSITE" id="PS01224">
    <property type="entry name" value="ARGC"/>
    <property type="match status" value="1"/>
</dbReference>
<feature type="chain" id="PRO_0000112512" description="N-acetyl-gamma-glutamyl-phosphate reductase">
    <location>
        <begin position="1"/>
        <end position="310"/>
    </location>
</feature>
<feature type="active site" evidence="1">
    <location>
        <position position="117"/>
    </location>
</feature>
<proteinExistence type="inferred from homology"/>
<name>ARGC_RHIME</name>
<keyword id="KW-0028">Amino-acid biosynthesis</keyword>
<keyword id="KW-0055">Arginine biosynthesis</keyword>
<keyword id="KW-0963">Cytoplasm</keyword>
<keyword id="KW-0521">NADP</keyword>
<keyword id="KW-0560">Oxidoreductase</keyword>
<keyword id="KW-1185">Reference proteome</keyword>
<organism>
    <name type="scientific">Rhizobium meliloti (strain 1021)</name>
    <name type="common">Ensifer meliloti</name>
    <name type="synonym">Sinorhizobium meliloti</name>
    <dbReference type="NCBI Taxonomy" id="266834"/>
    <lineage>
        <taxon>Bacteria</taxon>
        <taxon>Pseudomonadati</taxon>
        <taxon>Pseudomonadota</taxon>
        <taxon>Alphaproteobacteria</taxon>
        <taxon>Hyphomicrobiales</taxon>
        <taxon>Rhizobiaceae</taxon>
        <taxon>Sinorhizobium/Ensifer group</taxon>
        <taxon>Sinorhizobium</taxon>
    </lineage>
</organism>
<reference key="1">
    <citation type="journal article" date="2001" name="Proc. Natl. Acad. Sci. U.S.A.">
        <title>Analysis of the chromosome sequence of the legume symbiont Sinorhizobium meliloti strain 1021.</title>
        <authorList>
            <person name="Capela D."/>
            <person name="Barloy-Hubler F."/>
            <person name="Gouzy J."/>
            <person name="Bothe G."/>
            <person name="Ampe F."/>
            <person name="Batut J."/>
            <person name="Boistard P."/>
            <person name="Becker A."/>
            <person name="Boutry M."/>
            <person name="Cadieu E."/>
            <person name="Dreano S."/>
            <person name="Gloux S."/>
            <person name="Godrie T."/>
            <person name="Goffeau A."/>
            <person name="Kahn D."/>
            <person name="Kiss E."/>
            <person name="Lelaure V."/>
            <person name="Masuy D."/>
            <person name="Pohl T."/>
            <person name="Portetelle D."/>
            <person name="Puehler A."/>
            <person name="Purnelle B."/>
            <person name="Ramsperger U."/>
            <person name="Renard C."/>
            <person name="Thebault P."/>
            <person name="Vandenbol M."/>
            <person name="Weidner S."/>
            <person name="Galibert F."/>
        </authorList>
    </citation>
    <scope>NUCLEOTIDE SEQUENCE [LARGE SCALE GENOMIC DNA]</scope>
    <source>
        <strain>1021</strain>
    </source>
</reference>
<reference key="2">
    <citation type="journal article" date="2001" name="Science">
        <title>The composite genome of the legume symbiont Sinorhizobium meliloti.</title>
        <authorList>
            <person name="Galibert F."/>
            <person name="Finan T.M."/>
            <person name="Long S.R."/>
            <person name="Puehler A."/>
            <person name="Abola P."/>
            <person name="Ampe F."/>
            <person name="Barloy-Hubler F."/>
            <person name="Barnett M.J."/>
            <person name="Becker A."/>
            <person name="Boistard P."/>
            <person name="Bothe G."/>
            <person name="Boutry M."/>
            <person name="Bowser L."/>
            <person name="Buhrmester J."/>
            <person name="Cadieu E."/>
            <person name="Capela D."/>
            <person name="Chain P."/>
            <person name="Cowie A."/>
            <person name="Davis R.W."/>
            <person name="Dreano S."/>
            <person name="Federspiel N.A."/>
            <person name="Fisher R.F."/>
            <person name="Gloux S."/>
            <person name="Godrie T."/>
            <person name="Goffeau A."/>
            <person name="Golding B."/>
            <person name="Gouzy J."/>
            <person name="Gurjal M."/>
            <person name="Hernandez-Lucas I."/>
            <person name="Hong A."/>
            <person name="Huizar L."/>
            <person name="Hyman R.W."/>
            <person name="Jones T."/>
            <person name="Kahn D."/>
            <person name="Kahn M.L."/>
            <person name="Kalman S."/>
            <person name="Keating D.H."/>
            <person name="Kiss E."/>
            <person name="Komp C."/>
            <person name="Lelaure V."/>
            <person name="Masuy D."/>
            <person name="Palm C."/>
            <person name="Peck M.C."/>
            <person name="Pohl T.M."/>
            <person name="Portetelle D."/>
            <person name="Purnelle B."/>
            <person name="Ramsperger U."/>
            <person name="Surzycki R."/>
            <person name="Thebault P."/>
            <person name="Vandenbol M."/>
            <person name="Vorhoelter F.J."/>
            <person name="Weidner S."/>
            <person name="Wells D.H."/>
            <person name="Wong K."/>
            <person name="Yeh K.-C."/>
            <person name="Batut J."/>
        </authorList>
    </citation>
    <scope>NUCLEOTIDE SEQUENCE [LARGE SCALE GENOMIC DNA]</scope>
    <source>
        <strain>1021</strain>
    </source>
</reference>
<evidence type="ECO:0000255" key="1">
    <source>
        <dbReference type="HAMAP-Rule" id="MF_01110"/>
    </source>
</evidence>
<evidence type="ECO:0000305" key="2"/>
<accession>Q92QR7</accession>
<comment type="function">
    <text evidence="1">Catalyzes the NADPH-dependent reduction of N-acetyl-5-glutamyl phosphate to yield N-acetyl-L-glutamate 5-semialdehyde.</text>
</comment>
<comment type="catalytic activity">
    <reaction evidence="1">
        <text>N-acetyl-L-glutamate 5-semialdehyde + phosphate + NADP(+) = N-acetyl-L-glutamyl 5-phosphate + NADPH + H(+)</text>
        <dbReference type="Rhea" id="RHEA:21588"/>
        <dbReference type="ChEBI" id="CHEBI:15378"/>
        <dbReference type="ChEBI" id="CHEBI:29123"/>
        <dbReference type="ChEBI" id="CHEBI:43474"/>
        <dbReference type="ChEBI" id="CHEBI:57783"/>
        <dbReference type="ChEBI" id="CHEBI:57936"/>
        <dbReference type="ChEBI" id="CHEBI:58349"/>
        <dbReference type="EC" id="1.2.1.38"/>
    </reaction>
</comment>
<comment type="pathway">
    <text evidence="1">Amino-acid biosynthesis; L-arginine biosynthesis; N(2)-acetyl-L-ornithine from L-glutamate: step 3/4.</text>
</comment>
<comment type="subcellular location">
    <subcellularLocation>
        <location evidence="1">Cytoplasm</location>
    </subcellularLocation>
</comment>
<comment type="similarity">
    <text evidence="1">Belongs to the NAGSA dehydrogenase family. Type 2 subfamily.</text>
</comment>
<comment type="sequence caution" evidence="2">
    <conflict type="erroneous initiation">
        <sequence resource="EMBL-CDS" id="CAC45819"/>
    </conflict>
</comment>
<protein>
    <recommendedName>
        <fullName evidence="1">N-acetyl-gamma-glutamyl-phosphate reductase</fullName>
        <shortName evidence="1">AGPR</shortName>
        <ecNumber evidence="1">1.2.1.38</ecNumber>
    </recommendedName>
    <alternativeName>
        <fullName evidence="1">N-acetyl-glutamate semialdehyde dehydrogenase</fullName>
        <shortName evidence="1">NAGSA dehydrogenase</shortName>
    </alternativeName>
</protein>
<sequence>MKPKIFIDGEHGTTGLQIRVRMAGRTDLELLSIPEAERRNAAMREDLLNSADIAILCLPDDASREAVAMVAGNNRVRIIDTSTAHRVAPDWAYGFAEMDKAQPQRIRDARHVANPGCYPTGAIALIRPLRQAGILPDGYPVTVNAVSGYTGGGKQMIAQMEDDQNPDHIGAPHFLYGLTLKHKHVPEMKMHGLLERAPVFSPSVGKFAQGMIVQVPLYLEDLAAGATLETIHRALVDHYAGQSIVEVVPLDESAKLARIDATELAGSDAMKLFVFGTKGGAHVNLVALLDNLGKGASGAAVQNMDLMLSA</sequence>
<gene>
    <name evidence="1" type="primary">argC</name>
    <name type="ordered locus">R01240</name>
    <name type="ORF">SMc01801</name>
</gene>